<gene>
    <name evidence="1" type="primary">aat</name>
    <name type="ordered locus">Patl_2371</name>
</gene>
<name>LFTR_PSEA6</name>
<protein>
    <recommendedName>
        <fullName evidence="1">Leucyl/phenylalanyl-tRNA--protein transferase</fullName>
        <ecNumber evidence="1">2.3.2.6</ecNumber>
    </recommendedName>
    <alternativeName>
        <fullName evidence="1">L/F-transferase</fullName>
    </alternativeName>
    <alternativeName>
        <fullName evidence="1">Leucyltransferase</fullName>
    </alternativeName>
    <alternativeName>
        <fullName evidence="1">Phenyalanyltransferase</fullName>
    </alternativeName>
</protein>
<keyword id="KW-0012">Acyltransferase</keyword>
<keyword id="KW-0963">Cytoplasm</keyword>
<keyword id="KW-0808">Transferase</keyword>
<comment type="function">
    <text evidence="1">Functions in the N-end rule pathway of protein degradation where it conjugates Leu, Phe and, less efficiently, Met from aminoacyl-tRNAs to the N-termini of proteins containing an N-terminal arginine or lysine.</text>
</comment>
<comment type="catalytic activity">
    <reaction evidence="1">
        <text>N-terminal L-lysyl-[protein] + L-leucyl-tRNA(Leu) = N-terminal L-leucyl-L-lysyl-[protein] + tRNA(Leu) + H(+)</text>
        <dbReference type="Rhea" id="RHEA:12340"/>
        <dbReference type="Rhea" id="RHEA-COMP:9613"/>
        <dbReference type="Rhea" id="RHEA-COMP:9622"/>
        <dbReference type="Rhea" id="RHEA-COMP:12670"/>
        <dbReference type="Rhea" id="RHEA-COMP:12671"/>
        <dbReference type="ChEBI" id="CHEBI:15378"/>
        <dbReference type="ChEBI" id="CHEBI:65249"/>
        <dbReference type="ChEBI" id="CHEBI:78442"/>
        <dbReference type="ChEBI" id="CHEBI:78494"/>
        <dbReference type="ChEBI" id="CHEBI:133043"/>
        <dbReference type="EC" id="2.3.2.6"/>
    </reaction>
</comment>
<comment type="catalytic activity">
    <reaction evidence="1">
        <text>N-terminal L-arginyl-[protein] + L-leucyl-tRNA(Leu) = N-terminal L-leucyl-L-arginyl-[protein] + tRNA(Leu) + H(+)</text>
        <dbReference type="Rhea" id="RHEA:50416"/>
        <dbReference type="Rhea" id="RHEA-COMP:9613"/>
        <dbReference type="Rhea" id="RHEA-COMP:9622"/>
        <dbReference type="Rhea" id="RHEA-COMP:12672"/>
        <dbReference type="Rhea" id="RHEA-COMP:12673"/>
        <dbReference type="ChEBI" id="CHEBI:15378"/>
        <dbReference type="ChEBI" id="CHEBI:64719"/>
        <dbReference type="ChEBI" id="CHEBI:78442"/>
        <dbReference type="ChEBI" id="CHEBI:78494"/>
        <dbReference type="ChEBI" id="CHEBI:133044"/>
        <dbReference type="EC" id="2.3.2.6"/>
    </reaction>
</comment>
<comment type="catalytic activity">
    <reaction evidence="1">
        <text>L-phenylalanyl-tRNA(Phe) + an N-terminal L-alpha-aminoacyl-[protein] = an N-terminal L-phenylalanyl-L-alpha-aminoacyl-[protein] + tRNA(Phe)</text>
        <dbReference type="Rhea" id="RHEA:43632"/>
        <dbReference type="Rhea" id="RHEA-COMP:9668"/>
        <dbReference type="Rhea" id="RHEA-COMP:9699"/>
        <dbReference type="Rhea" id="RHEA-COMP:10636"/>
        <dbReference type="Rhea" id="RHEA-COMP:10637"/>
        <dbReference type="ChEBI" id="CHEBI:78442"/>
        <dbReference type="ChEBI" id="CHEBI:78531"/>
        <dbReference type="ChEBI" id="CHEBI:78597"/>
        <dbReference type="ChEBI" id="CHEBI:83561"/>
        <dbReference type="EC" id="2.3.2.6"/>
    </reaction>
</comment>
<comment type="subcellular location">
    <subcellularLocation>
        <location evidence="1">Cytoplasm</location>
    </subcellularLocation>
</comment>
<comment type="similarity">
    <text evidence="1">Belongs to the L/F-transferase family.</text>
</comment>
<reference key="1">
    <citation type="submission" date="2006-06" db="EMBL/GenBank/DDBJ databases">
        <title>Complete sequence of Pseudoalteromonas atlantica T6c.</title>
        <authorList>
            <consortium name="US DOE Joint Genome Institute"/>
            <person name="Copeland A."/>
            <person name="Lucas S."/>
            <person name="Lapidus A."/>
            <person name="Barry K."/>
            <person name="Detter J.C."/>
            <person name="Glavina del Rio T."/>
            <person name="Hammon N."/>
            <person name="Israni S."/>
            <person name="Dalin E."/>
            <person name="Tice H."/>
            <person name="Pitluck S."/>
            <person name="Saunders E."/>
            <person name="Brettin T."/>
            <person name="Bruce D."/>
            <person name="Han C."/>
            <person name="Tapia R."/>
            <person name="Gilna P."/>
            <person name="Schmutz J."/>
            <person name="Larimer F."/>
            <person name="Land M."/>
            <person name="Hauser L."/>
            <person name="Kyrpides N."/>
            <person name="Kim E."/>
            <person name="Karls A.C."/>
            <person name="Bartlett D."/>
            <person name="Higgins B.P."/>
            <person name="Richardson P."/>
        </authorList>
    </citation>
    <scope>NUCLEOTIDE SEQUENCE [LARGE SCALE GENOMIC DNA]</scope>
    <source>
        <strain>T6c / ATCC BAA-1087</strain>
    </source>
</reference>
<sequence>MIELFQLDKSLHFPPPAHALTDPPGLLAFGGDLSVNRLLHAYQQGIFPWFSANEPILWWSPDPRGILPLDNFSVSKSLRKFIRKTPLRVTVNRRFDEVIYACAKVKRQSSGTWITDDMINAYIELHRCGGAHSIEVWDDEELVGGLYGVTPGNVFCGESMFHYATNASKLAMFYLVELLRLNGCEFIDCQLQNDHLASLGCIEMPRAEFLNRLKEAVKHPMDQSLWLPRELTQP</sequence>
<organism>
    <name type="scientific">Pseudoalteromonas atlantica (strain T6c / ATCC BAA-1087)</name>
    <dbReference type="NCBI Taxonomy" id="3042615"/>
    <lineage>
        <taxon>Bacteria</taxon>
        <taxon>Pseudomonadati</taxon>
        <taxon>Pseudomonadota</taxon>
        <taxon>Gammaproteobacteria</taxon>
        <taxon>Alteromonadales</taxon>
        <taxon>Alteromonadaceae</taxon>
        <taxon>Paraglaciecola</taxon>
    </lineage>
</organism>
<evidence type="ECO:0000255" key="1">
    <source>
        <dbReference type="HAMAP-Rule" id="MF_00688"/>
    </source>
</evidence>
<accession>Q15TA1</accession>
<proteinExistence type="inferred from homology"/>
<dbReference type="EC" id="2.3.2.6" evidence="1"/>
<dbReference type="EMBL" id="CP000388">
    <property type="protein sequence ID" value="ABG40887.1"/>
    <property type="molecule type" value="Genomic_DNA"/>
</dbReference>
<dbReference type="RefSeq" id="WP_011575167.1">
    <property type="nucleotide sequence ID" value="NC_008228.1"/>
</dbReference>
<dbReference type="SMR" id="Q15TA1"/>
<dbReference type="STRING" id="342610.Patl_2371"/>
<dbReference type="KEGG" id="pat:Patl_2371"/>
<dbReference type="eggNOG" id="COG2360">
    <property type="taxonomic scope" value="Bacteria"/>
</dbReference>
<dbReference type="HOGENOM" id="CLU_075045_0_0_6"/>
<dbReference type="OrthoDB" id="9790282at2"/>
<dbReference type="Proteomes" id="UP000001981">
    <property type="component" value="Chromosome"/>
</dbReference>
<dbReference type="GO" id="GO:0005737">
    <property type="term" value="C:cytoplasm"/>
    <property type="evidence" value="ECO:0007669"/>
    <property type="project" value="UniProtKB-SubCell"/>
</dbReference>
<dbReference type="GO" id="GO:0008914">
    <property type="term" value="F:leucyl-tRNA--protein transferase activity"/>
    <property type="evidence" value="ECO:0007669"/>
    <property type="project" value="UniProtKB-UniRule"/>
</dbReference>
<dbReference type="GO" id="GO:0030163">
    <property type="term" value="P:protein catabolic process"/>
    <property type="evidence" value="ECO:0007669"/>
    <property type="project" value="UniProtKB-UniRule"/>
</dbReference>
<dbReference type="FunFam" id="3.30.70.3550:FF:000001">
    <property type="entry name" value="Leucyl/phenylalanyl-tRNA--protein transferase"/>
    <property type="match status" value="1"/>
</dbReference>
<dbReference type="FunFam" id="3.40.630.70:FF:000001">
    <property type="entry name" value="Leucyl/phenylalanyl-tRNA--protein transferase"/>
    <property type="match status" value="1"/>
</dbReference>
<dbReference type="Gene3D" id="3.40.630.70">
    <property type="entry name" value="Leucyl/phenylalanyl-tRNA-protein transferase, C-terminal domain"/>
    <property type="match status" value="1"/>
</dbReference>
<dbReference type="Gene3D" id="3.30.70.3550">
    <property type="entry name" value="Leucyl/phenylalanyl-tRNA-protein transferase, N-terminal domain"/>
    <property type="match status" value="1"/>
</dbReference>
<dbReference type="HAMAP" id="MF_00688">
    <property type="entry name" value="Leu_Phe_trans"/>
    <property type="match status" value="1"/>
</dbReference>
<dbReference type="InterPro" id="IPR016181">
    <property type="entry name" value="Acyl_CoA_acyltransferase"/>
</dbReference>
<dbReference type="InterPro" id="IPR004616">
    <property type="entry name" value="Leu/Phe-tRNA_Trfase"/>
</dbReference>
<dbReference type="InterPro" id="IPR042203">
    <property type="entry name" value="Leu/Phe-tRNA_Trfase_C"/>
</dbReference>
<dbReference type="InterPro" id="IPR042221">
    <property type="entry name" value="Leu/Phe-tRNA_Trfase_N"/>
</dbReference>
<dbReference type="NCBIfam" id="TIGR00667">
    <property type="entry name" value="aat"/>
    <property type="match status" value="1"/>
</dbReference>
<dbReference type="PANTHER" id="PTHR30098">
    <property type="entry name" value="LEUCYL/PHENYLALANYL-TRNA--PROTEIN TRANSFERASE"/>
    <property type="match status" value="1"/>
</dbReference>
<dbReference type="PANTHER" id="PTHR30098:SF2">
    <property type="entry name" value="LEUCYL_PHENYLALANYL-TRNA--PROTEIN TRANSFERASE"/>
    <property type="match status" value="1"/>
</dbReference>
<dbReference type="Pfam" id="PF03588">
    <property type="entry name" value="Leu_Phe_trans"/>
    <property type="match status" value="1"/>
</dbReference>
<dbReference type="SUPFAM" id="SSF55729">
    <property type="entry name" value="Acyl-CoA N-acyltransferases (Nat)"/>
    <property type="match status" value="1"/>
</dbReference>
<feature type="chain" id="PRO_1000045109" description="Leucyl/phenylalanyl-tRNA--protein transferase">
    <location>
        <begin position="1"/>
        <end position="234"/>
    </location>
</feature>